<sequence>MNAFTLYPAIDMRNGKCVRLIQGDYGKETIYGDSPLDMAAQFAQEGAEWIHLVDLDGAKAGRKVNDRHVLDIARQLDAKVEIGGGIRSEADVYGYLSQGVDRVILGSSAVSDPAFVKSMLKQYGGKIAIGLDARNGYVSTEGWLETSSVRAADLGRELAAEGAETFIFTDIATDGMLSGPNIESTVQLAKATGKTVIASGGVSSVADLKALARFKDAGVSGAIIGKALYTKQFTLAEALSGVKDA</sequence>
<name>HIS4_BACVZ</name>
<dbReference type="EC" id="5.3.1.16" evidence="1"/>
<dbReference type="EMBL" id="CP000560">
    <property type="protein sequence ID" value="ABS75539.1"/>
    <property type="molecule type" value="Genomic_DNA"/>
</dbReference>
<dbReference type="RefSeq" id="WP_012118544.1">
    <property type="nucleotide sequence ID" value="NC_009725.2"/>
</dbReference>
<dbReference type="SMR" id="A7Z963"/>
<dbReference type="GeneID" id="93082354"/>
<dbReference type="KEGG" id="bay:RBAM_032090"/>
<dbReference type="HOGENOM" id="CLU_048577_1_1_9"/>
<dbReference type="UniPathway" id="UPA00031">
    <property type="reaction ID" value="UER00009"/>
</dbReference>
<dbReference type="Proteomes" id="UP000001120">
    <property type="component" value="Chromosome"/>
</dbReference>
<dbReference type="GO" id="GO:0005737">
    <property type="term" value="C:cytoplasm"/>
    <property type="evidence" value="ECO:0007669"/>
    <property type="project" value="UniProtKB-SubCell"/>
</dbReference>
<dbReference type="GO" id="GO:0003949">
    <property type="term" value="F:1-(5-phosphoribosyl)-5-[(5-phosphoribosylamino)methylideneamino]imidazole-4-carboxamide isomerase activity"/>
    <property type="evidence" value="ECO:0007669"/>
    <property type="project" value="UniProtKB-UniRule"/>
</dbReference>
<dbReference type="GO" id="GO:0000105">
    <property type="term" value="P:L-histidine biosynthetic process"/>
    <property type="evidence" value="ECO:0007669"/>
    <property type="project" value="UniProtKB-UniRule"/>
</dbReference>
<dbReference type="GO" id="GO:0000162">
    <property type="term" value="P:L-tryptophan biosynthetic process"/>
    <property type="evidence" value="ECO:0007669"/>
    <property type="project" value="TreeGrafter"/>
</dbReference>
<dbReference type="CDD" id="cd04732">
    <property type="entry name" value="HisA"/>
    <property type="match status" value="1"/>
</dbReference>
<dbReference type="FunFam" id="3.20.20.70:FF:000009">
    <property type="entry name" value="1-(5-phosphoribosyl)-5-[(5-phosphoribosylamino)methylideneamino] imidazole-4-carboxamide isomerase"/>
    <property type="match status" value="1"/>
</dbReference>
<dbReference type="Gene3D" id="3.20.20.70">
    <property type="entry name" value="Aldolase class I"/>
    <property type="match status" value="1"/>
</dbReference>
<dbReference type="HAMAP" id="MF_01014">
    <property type="entry name" value="HisA"/>
    <property type="match status" value="1"/>
</dbReference>
<dbReference type="InterPro" id="IPR013785">
    <property type="entry name" value="Aldolase_TIM"/>
</dbReference>
<dbReference type="InterPro" id="IPR006062">
    <property type="entry name" value="His_biosynth"/>
</dbReference>
<dbReference type="InterPro" id="IPR006063">
    <property type="entry name" value="HisA_bact_arch"/>
</dbReference>
<dbReference type="InterPro" id="IPR044524">
    <property type="entry name" value="Isoase_HisA-like"/>
</dbReference>
<dbReference type="InterPro" id="IPR023016">
    <property type="entry name" value="Isoase_HisA-like_bact"/>
</dbReference>
<dbReference type="InterPro" id="IPR011060">
    <property type="entry name" value="RibuloseP-bd_barrel"/>
</dbReference>
<dbReference type="NCBIfam" id="TIGR00007">
    <property type="entry name" value="1-(5-phosphoribosyl)-5-[(5-phosphoribosylamino)methylideneamino]imidazole-4-carboxamide isomerase"/>
    <property type="match status" value="1"/>
</dbReference>
<dbReference type="PANTHER" id="PTHR43090">
    <property type="entry name" value="1-(5-PHOSPHORIBOSYL)-5-[(5-PHOSPHORIBOSYLAMINO)METHYLIDENEAMINO] IMIDAZOLE-4-CARBOXAMIDE ISOMERASE"/>
    <property type="match status" value="1"/>
</dbReference>
<dbReference type="PANTHER" id="PTHR43090:SF2">
    <property type="entry name" value="1-(5-PHOSPHORIBOSYL)-5-[(5-PHOSPHORIBOSYLAMINO)METHYLIDENEAMINO] IMIDAZOLE-4-CARBOXAMIDE ISOMERASE"/>
    <property type="match status" value="1"/>
</dbReference>
<dbReference type="Pfam" id="PF00977">
    <property type="entry name" value="His_biosynth"/>
    <property type="match status" value="1"/>
</dbReference>
<dbReference type="SUPFAM" id="SSF51366">
    <property type="entry name" value="Ribulose-phoshate binding barrel"/>
    <property type="match status" value="1"/>
</dbReference>
<proteinExistence type="inferred from homology"/>
<keyword id="KW-0028">Amino-acid biosynthesis</keyword>
<keyword id="KW-0963">Cytoplasm</keyword>
<keyword id="KW-0368">Histidine biosynthesis</keyword>
<keyword id="KW-0413">Isomerase</keyword>
<organism>
    <name type="scientific">Bacillus velezensis (strain DSM 23117 / BGSC 10A6 / LMG 26770 / FZB42)</name>
    <name type="common">Bacillus amyloliquefaciens subsp. plantarum</name>
    <dbReference type="NCBI Taxonomy" id="326423"/>
    <lineage>
        <taxon>Bacteria</taxon>
        <taxon>Bacillati</taxon>
        <taxon>Bacillota</taxon>
        <taxon>Bacilli</taxon>
        <taxon>Bacillales</taxon>
        <taxon>Bacillaceae</taxon>
        <taxon>Bacillus</taxon>
        <taxon>Bacillus amyloliquefaciens group</taxon>
    </lineage>
</organism>
<comment type="catalytic activity">
    <reaction evidence="1">
        <text>1-(5-phospho-beta-D-ribosyl)-5-[(5-phospho-beta-D-ribosylamino)methylideneamino]imidazole-4-carboxamide = 5-[(5-phospho-1-deoxy-D-ribulos-1-ylimino)methylamino]-1-(5-phospho-beta-D-ribosyl)imidazole-4-carboxamide</text>
        <dbReference type="Rhea" id="RHEA:15469"/>
        <dbReference type="ChEBI" id="CHEBI:58435"/>
        <dbReference type="ChEBI" id="CHEBI:58525"/>
        <dbReference type="EC" id="5.3.1.16"/>
    </reaction>
</comment>
<comment type="pathway">
    <text evidence="1">Amino-acid biosynthesis; L-histidine biosynthesis; L-histidine from 5-phospho-alpha-D-ribose 1-diphosphate: step 4/9.</text>
</comment>
<comment type="subcellular location">
    <subcellularLocation>
        <location evidence="1">Cytoplasm</location>
    </subcellularLocation>
</comment>
<comment type="similarity">
    <text evidence="1">Belongs to the HisA/HisF family.</text>
</comment>
<evidence type="ECO:0000255" key="1">
    <source>
        <dbReference type="HAMAP-Rule" id="MF_01014"/>
    </source>
</evidence>
<reference key="1">
    <citation type="journal article" date="2007" name="Nat. Biotechnol.">
        <title>Comparative analysis of the complete genome sequence of the plant growth-promoting bacterium Bacillus amyloliquefaciens FZB42.</title>
        <authorList>
            <person name="Chen X.H."/>
            <person name="Koumoutsi A."/>
            <person name="Scholz R."/>
            <person name="Eisenreich A."/>
            <person name="Schneider K."/>
            <person name="Heinemeyer I."/>
            <person name="Morgenstern B."/>
            <person name="Voss B."/>
            <person name="Hess W.R."/>
            <person name="Reva O."/>
            <person name="Junge H."/>
            <person name="Voigt B."/>
            <person name="Jungblut P.R."/>
            <person name="Vater J."/>
            <person name="Suessmuth R."/>
            <person name="Liesegang H."/>
            <person name="Strittmatter A."/>
            <person name="Gottschalk G."/>
            <person name="Borriss R."/>
        </authorList>
    </citation>
    <scope>NUCLEOTIDE SEQUENCE [LARGE SCALE GENOMIC DNA]</scope>
    <source>
        <strain>DSM 23117 / BGSC 10A6 / LMG 26770 / FZB42</strain>
    </source>
</reference>
<feature type="chain" id="PRO_1000063184" description="1-(5-phosphoribosyl)-5-[(5-phosphoribosylamino)methylideneamino] imidazole-4-carboxamide isomerase">
    <location>
        <begin position="1"/>
        <end position="245"/>
    </location>
</feature>
<feature type="active site" description="Proton acceptor" evidence="1">
    <location>
        <position position="11"/>
    </location>
</feature>
<feature type="active site" description="Proton donor" evidence="1">
    <location>
        <position position="132"/>
    </location>
</feature>
<protein>
    <recommendedName>
        <fullName evidence="1">1-(5-phosphoribosyl)-5-[(5-phosphoribosylamino)methylideneamino] imidazole-4-carboxamide isomerase</fullName>
        <ecNumber evidence="1">5.3.1.16</ecNumber>
    </recommendedName>
    <alternativeName>
        <fullName evidence="1">Phosphoribosylformimino-5-aminoimidazole carboxamide ribotide isomerase</fullName>
    </alternativeName>
</protein>
<gene>
    <name evidence="1" type="primary">hisA</name>
    <name type="ordered locus">RBAM_032090</name>
</gene>
<accession>A7Z963</accession>